<evidence type="ECO:0000255" key="1">
    <source>
        <dbReference type="HAMAP-Rule" id="MF_00227"/>
    </source>
</evidence>
<sequence length="124" mass="14160">MSRLSWKKEHKLLRKPEFDLCYEQGKKLFTKSFILFVLCHGSGPSGVRLGLTVSRKKGPAVVRNRIKRVLRSYFRINQEIFQVRADIIIVPKRALDGKTITYALAEKELLPMVGKINKLSCGGE</sequence>
<accession>C6C0J4</accession>
<organism>
    <name type="scientific">Maridesulfovibrio salexigens (strain ATCC 14822 / DSM 2638 / NCIMB 8403 / VKM B-1763)</name>
    <name type="common">Desulfovibrio salexigens</name>
    <dbReference type="NCBI Taxonomy" id="526222"/>
    <lineage>
        <taxon>Bacteria</taxon>
        <taxon>Pseudomonadati</taxon>
        <taxon>Thermodesulfobacteriota</taxon>
        <taxon>Desulfovibrionia</taxon>
        <taxon>Desulfovibrionales</taxon>
        <taxon>Desulfovibrionaceae</taxon>
        <taxon>Maridesulfovibrio</taxon>
    </lineage>
</organism>
<reference key="1">
    <citation type="submission" date="2009-06" db="EMBL/GenBank/DDBJ databases">
        <title>Complete sequence of Desulfovibrio salexigens DSM 2638.</title>
        <authorList>
            <consortium name="US DOE Joint Genome Institute"/>
            <person name="Lucas S."/>
            <person name="Copeland A."/>
            <person name="Lapidus A."/>
            <person name="Glavina del Rio T."/>
            <person name="Tice H."/>
            <person name="Bruce D."/>
            <person name="Goodwin L."/>
            <person name="Pitluck S."/>
            <person name="Munk A.C."/>
            <person name="Brettin T."/>
            <person name="Detter J.C."/>
            <person name="Han C."/>
            <person name="Tapia R."/>
            <person name="Larimer F."/>
            <person name="Land M."/>
            <person name="Hauser L."/>
            <person name="Kyrpides N."/>
            <person name="Anderson I."/>
            <person name="Wall J.D."/>
            <person name="Arkin A.P."/>
            <person name="Dehal P."/>
            <person name="Chivian D."/>
            <person name="Giles B."/>
            <person name="Hazen T.C."/>
        </authorList>
    </citation>
    <scope>NUCLEOTIDE SEQUENCE [LARGE SCALE GENOMIC DNA]</scope>
    <source>
        <strain>ATCC 14822 / DSM 2638 / NCIMB 8403 / VKM B-1763</strain>
    </source>
</reference>
<keyword id="KW-0255">Endonuclease</keyword>
<keyword id="KW-0378">Hydrolase</keyword>
<keyword id="KW-0540">Nuclease</keyword>
<keyword id="KW-1185">Reference proteome</keyword>
<keyword id="KW-0694">RNA-binding</keyword>
<keyword id="KW-0819">tRNA processing</keyword>
<protein>
    <recommendedName>
        <fullName evidence="1">Ribonuclease P protein component</fullName>
        <shortName evidence="1">RNase P protein</shortName>
        <shortName evidence="1">RNaseP protein</shortName>
        <ecNumber evidence="1">3.1.26.5</ecNumber>
    </recommendedName>
    <alternativeName>
        <fullName evidence="1">Protein C5</fullName>
    </alternativeName>
</protein>
<proteinExistence type="inferred from homology"/>
<gene>
    <name evidence="1" type="primary">rnpA</name>
    <name type="ordered locus">Desal_1064</name>
</gene>
<name>RNPA_MARSD</name>
<dbReference type="EC" id="3.1.26.5" evidence="1"/>
<dbReference type="EMBL" id="CP001649">
    <property type="protein sequence ID" value="ACS79128.1"/>
    <property type="molecule type" value="Genomic_DNA"/>
</dbReference>
<dbReference type="RefSeq" id="WP_015850947.1">
    <property type="nucleotide sequence ID" value="NC_012881.1"/>
</dbReference>
<dbReference type="SMR" id="C6C0J4"/>
<dbReference type="STRING" id="526222.Desal_1064"/>
<dbReference type="KEGG" id="dsa:Desal_1064"/>
<dbReference type="eggNOG" id="COG0594">
    <property type="taxonomic scope" value="Bacteria"/>
</dbReference>
<dbReference type="HOGENOM" id="CLU_117179_9_2_7"/>
<dbReference type="OrthoDB" id="9810867at2"/>
<dbReference type="Proteomes" id="UP000002601">
    <property type="component" value="Chromosome"/>
</dbReference>
<dbReference type="GO" id="GO:0030677">
    <property type="term" value="C:ribonuclease P complex"/>
    <property type="evidence" value="ECO:0007669"/>
    <property type="project" value="TreeGrafter"/>
</dbReference>
<dbReference type="GO" id="GO:0042781">
    <property type="term" value="F:3'-tRNA processing endoribonuclease activity"/>
    <property type="evidence" value="ECO:0007669"/>
    <property type="project" value="TreeGrafter"/>
</dbReference>
<dbReference type="GO" id="GO:0004526">
    <property type="term" value="F:ribonuclease P activity"/>
    <property type="evidence" value="ECO:0007669"/>
    <property type="project" value="UniProtKB-UniRule"/>
</dbReference>
<dbReference type="GO" id="GO:0000049">
    <property type="term" value="F:tRNA binding"/>
    <property type="evidence" value="ECO:0007669"/>
    <property type="project" value="UniProtKB-UniRule"/>
</dbReference>
<dbReference type="GO" id="GO:0001682">
    <property type="term" value="P:tRNA 5'-leader removal"/>
    <property type="evidence" value="ECO:0007669"/>
    <property type="project" value="UniProtKB-UniRule"/>
</dbReference>
<dbReference type="Gene3D" id="3.30.230.10">
    <property type="match status" value="1"/>
</dbReference>
<dbReference type="HAMAP" id="MF_00227">
    <property type="entry name" value="RNase_P"/>
    <property type="match status" value="1"/>
</dbReference>
<dbReference type="InterPro" id="IPR020568">
    <property type="entry name" value="Ribosomal_Su5_D2-typ_SF"/>
</dbReference>
<dbReference type="InterPro" id="IPR014721">
    <property type="entry name" value="Ribsml_uS5_D2-typ_fold_subgr"/>
</dbReference>
<dbReference type="InterPro" id="IPR000100">
    <property type="entry name" value="RNase_P"/>
</dbReference>
<dbReference type="NCBIfam" id="TIGR00188">
    <property type="entry name" value="rnpA"/>
    <property type="match status" value="1"/>
</dbReference>
<dbReference type="PANTHER" id="PTHR33992">
    <property type="entry name" value="RIBONUCLEASE P PROTEIN COMPONENT"/>
    <property type="match status" value="1"/>
</dbReference>
<dbReference type="PANTHER" id="PTHR33992:SF1">
    <property type="entry name" value="RIBONUCLEASE P PROTEIN COMPONENT"/>
    <property type="match status" value="1"/>
</dbReference>
<dbReference type="Pfam" id="PF00825">
    <property type="entry name" value="Ribonuclease_P"/>
    <property type="match status" value="1"/>
</dbReference>
<dbReference type="SUPFAM" id="SSF54211">
    <property type="entry name" value="Ribosomal protein S5 domain 2-like"/>
    <property type="match status" value="1"/>
</dbReference>
<comment type="function">
    <text evidence="1">RNaseP catalyzes the removal of the 5'-leader sequence from pre-tRNA to produce the mature 5'-terminus. It can also cleave other RNA substrates such as 4.5S RNA. The protein component plays an auxiliary but essential role in vivo by binding to the 5'-leader sequence and broadening the substrate specificity of the ribozyme.</text>
</comment>
<comment type="catalytic activity">
    <reaction evidence="1">
        <text>Endonucleolytic cleavage of RNA, removing 5'-extranucleotides from tRNA precursor.</text>
        <dbReference type="EC" id="3.1.26.5"/>
    </reaction>
</comment>
<comment type="subunit">
    <text evidence="1">Consists of a catalytic RNA component (M1 or rnpB) and a protein subunit.</text>
</comment>
<comment type="similarity">
    <text evidence="1">Belongs to the RnpA family.</text>
</comment>
<feature type="chain" id="PRO_1000204342" description="Ribonuclease P protein component">
    <location>
        <begin position="1"/>
        <end position="124"/>
    </location>
</feature>